<evidence type="ECO:0000255" key="1">
    <source>
        <dbReference type="HAMAP-Rule" id="MF_00202"/>
    </source>
</evidence>
<sequence>MPQTDTAELVVLLDDDGRTIGSAPKAQVHHASTPLHLAFSCYLFDDAGRVLLTRRAVHKRTFPGIWTNTCCGHPAPGEALQDAVTRRVREELGVGITDLRCVLPDFRYRAVAADGVVENEVCPVFCGRAVGQVHPDRDEVADHVWVPWQHMRAAAEFGWAISPWAAEQVPLLDAAGIGHRD</sequence>
<dbReference type="EC" id="5.3.3.2" evidence="1"/>
<dbReference type="EMBL" id="CP000511">
    <property type="protein sequence ID" value="ABM12412.1"/>
    <property type="molecule type" value="Genomic_DNA"/>
</dbReference>
<dbReference type="RefSeq" id="WP_011778837.1">
    <property type="nucleotide sequence ID" value="NC_008726.1"/>
</dbReference>
<dbReference type="SMR" id="A1T5G2"/>
<dbReference type="STRING" id="350058.Mvan_1582"/>
<dbReference type="KEGG" id="mva:Mvan_1582"/>
<dbReference type="eggNOG" id="COG1443">
    <property type="taxonomic scope" value="Bacteria"/>
</dbReference>
<dbReference type="HOGENOM" id="CLU_060552_2_0_11"/>
<dbReference type="UniPathway" id="UPA00059">
    <property type="reaction ID" value="UER00104"/>
</dbReference>
<dbReference type="Proteomes" id="UP000009159">
    <property type="component" value="Chromosome"/>
</dbReference>
<dbReference type="GO" id="GO:0005737">
    <property type="term" value="C:cytoplasm"/>
    <property type="evidence" value="ECO:0007669"/>
    <property type="project" value="UniProtKB-SubCell"/>
</dbReference>
<dbReference type="GO" id="GO:0004452">
    <property type="term" value="F:isopentenyl-diphosphate delta-isomerase activity"/>
    <property type="evidence" value="ECO:0007669"/>
    <property type="project" value="UniProtKB-UniRule"/>
</dbReference>
<dbReference type="GO" id="GO:0046872">
    <property type="term" value="F:metal ion binding"/>
    <property type="evidence" value="ECO:0007669"/>
    <property type="project" value="UniProtKB-KW"/>
</dbReference>
<dbReference type="GO" id="GO:0050992">
    <property type="term" value="P:dimethylallyl diphosphate biosynthetic process"/>
    <property type="evidence" value="ECO:0007669"/>
    <property type="project" value="UniProtKB-UniRule"/>
</dbReference>
<dbReference type="GO" id="GO:0008299">
    <property type="term" value="P:isoprenoid biosynthetic process"/>
    <property type="evidence" value="ECO:0007669"/>
    <property type="project" value="UniProtKB-KW"/>
</dbReference>
<dbReference type="CDD" id="cd02885">
    <property type="entry name" value="NUDIX_IPP_Isomerase"/>
    <property type="match status" value="1"/>
</dbReference>
<dbReference type="Gene3D" id="3.90.79.10">
    <property type="entry name" value="Nucleoside Triphosphate Pyrophosphohydrolase"/>
    <property type="match status" value="1"/>
</dbReference>
<dbReference type="HAMAP" id="MF_00202">
    <property type="entry name" value="Idi"/>
    <property type="match status" value="1"/>
</dbReference>
<dbReference type="InterPro" id="IPR056375">
    <property type="entry name" value="Idi_bact"/>
</dbReference>
<dbReference type="InterPro" id="IPR011876">
    <property type="entry name" value="IsopentenylPP_isomerase_typ1"/>
</dbReference>
<dbReference type="InterPro" id="IPR015797">
    <property type="entry name" value="NUDIX_hydrolase-like_dom_sf"/>
</dbReference>
<dbReference type="InterPro" id="IPR000086">
    <property type="entry name" value="NUDIX_hydrolase_dom"/>
</dbReference>
<dbReference type="NCBIfam" id="TIGR02150">
    <property type="entry name" value="IPP_isom_1"/>
    <property type="match status" value="1"/>
</dbReference>
<dbReference type="NCBIfam" id="NF002995">
    <property type="entry name" value="PRK03759.1"/>
    <property type="match status" value="1"/>
</dbReference>
<dbReference type="PANTHER" id="PTHR10885">
    <property type="entry name" value="ISOPENTENYL-DIPHOSPHATE DELTA-ISOMERASE"/>
    <property type="match status" value="1"/>
</dbReference>
<dbReference type="PANTHER" id="PTHR10885:SF0">
    <property type="entry name" value="ISOPENTENYL-DIPHOSPHATE DELTA-ISOMERASE"/>
    <property type="match status" value="1"/>
</dbReference>
<dbReference type="Pfam" id="PF00293">
    <property type="entry name" value="NUDIX"/>
    <property type="match status" value="1"/>
</dbReference>
<dbReference type="PIRSF" id="PIRSF018427">
    <property type="entry name" value="Isopntndiph_ism"/>
    <property type="match status" value="1"/>
</dbReference>
<dbReference type="SUPFAM" id="SSF55811">
    <property type="entry name" value="Nudix"/>
    <property type="match status" value="1"/>
</dbReference>
<dbReference type="PROSITE" id="PS51462">
    <property type="entry name" value="NUDIX"/>
    <property type="match status" value="1"/>
</dbReference>
<protein>
    <recommendedName>
        <fullName evidence="1">Isopentenyl-diphosphate Delta-isomerase</fullName>
        <shortName evidence="1">IPP isomerase</shortName>
        <ecNumber evidence="1">5.3.3.2</ecNumber>
    </recommendedName>
    <alternativeName>
        <fullName evidence="1">IPP:DMAPP isomerase</fullName>
    </alternativeName>
    <alternativeName>
        <fullName evidence="1">Isopentenyl pyrophosphate isomerase</fullName>
    </alternativeName>
</protein>
<proteinExistence type="inferred from homology"/>
<comment type="function">
    <text evidence="1">Catalyzes the 1,3-allylic rearrangement of the homoallylic substrate isopentenyl (IPP) to its highly electrophilic allylic isomer, dimethylallyl diphosphate (DMAPP).</text>
</comment>
<comment type="catalytic activity">
    <reaction evidence="1">
        <text>isopentenyl diphosphate = dimethylallyl diphosphate</text>
        <dbReference type="Rhea" id="RHEA:23284"/>
        <dbReference type="ChEBI" id="CHEBI:57623"/>
        <dbReference type="ChEBI" id="CHEBI:128769"/>
        <dbReference type="EC" id="5.3.3.2"/>
    </reaction>
</comment>
<comment type="cofactor">
    <cofactor evidence="1">
        <name>Mg(2+)</name>
        <dbReference type="ChEBI" id="CHEBI:18420"/>
    </cofactor>
    <text evidence="1">Binds 1 Mg(2+) ion per subunit. The magnesium ion binds only when substrate is bound.</text>
</comment>
<comment type="cofactor">
    <cofactor evidence="1">
        <name>Mn(2+)</name>
        <dbReference type="ChEBI" id="CHEBI:29035"/>
    </cofactor>
    <text evidence="1">Binds 1 Mn(2+) ion per subunit.</text>
</comment>
<comment type="pathway">
    <text evidence="1">Isoprenoid biosynthesis; dimethylallyl diphosphate biosynthesis; dimethylallyl diphosphate from isopentenyl diphosphate: step 1/1.</text>
</comment>
<comment type="subcellular location">
    <subcellularLocation>
        <location evidence="1">Cytoplasm</location>
    </subcellularLocation>
</comment>
<comment type="similarity">
    <text evidence="1">Belongs to the IPP isomerase type 1 family.</text>
</comment>
<gene>
    <name evidence="1" type="primary">idi</name>
    <name type="ordered locus">Mvan_1582</name>
</gene>
<feature type="chain" id="PRO_0000325216" description="Isopentenyl-diphosphate Delta-isomerase">
    <location>
        <begin position="1"/>
        <end position="181"/>
    </location>
</feature>
<feature type="domain" description="Nudix hydrolase">
    <location>
        <begin position="34"/>
        <end position="167"/>
    </location>
</feature>
<feature type="active site" evidence="1">
    <location>
        <position position="71"/>
    </location>
</feature>
<feature type="active site" evidence="1">
    <location>
        <position position="120"/>
    </location>
</feature>
<feature type="binding site" evidence="1">
    <location>
        <position position="29"/>
    </location>
    <ligand>
        <name>Mn(2+)</name>
        <dbReference type="ChEBI" id="CHEBI:29035"/>
    </ligand>
</feature>
<feature type="binding site" evidence="1">
    <location>
        <position position="36"/>
    </location>
    <ligand>
        <name>Mn(2+)</name>
        <dbReference type="ChEBI" id="CHEBI:29035"/>
    </ligand>
</feature>
<feature type="binding site" evidence="1">
    <location>
        <position position="73"/>
    </location>
    <ligand>
        <name>Mn(2+)</name>
        <dbReference type="ChEBI" id="CHEBI:29035"/>
    </ligand>
</feature>
<feature type="binding site" evidence="1">
    <location>
        <position position="91"/>
    </location>
    <ligand>
        <name>Mg(2+)</name>
        <dbReference type="ChEBI" id="CHEBI:18420"/>
    </ligand>
</feature>
<feature type="binding site" evidence="1">
    <location>
        <position position="118"/>
    </location>
    <ligand>
        <name>Mn(2+)</name>
        <dbReference type="ChEBI" id="CHEBI:29035"/>
    </ligand>
</feature>
<feature type="binding site" evidence="1">
    <location>
        <position position="120"/>
    </location>
    <ligand>
        <name>Mn(2+)</name>
        <dbReference type="ChEBI" id="CHEBI:29035"/>
    </ligand>
</feature>
<organism>
    <name type="scientific">Mycolicibacterium vanbaalenii (strain DSM 7251 / JCM 13017 / BCRC 16820 / KCTC 9966 / NRRL B-24157 / PYR-1)</name>
    <name type="common">Mycobacterium vanbaalenii</name>
    <dbReference type="NCBI Taxonomy" id="350058"/>
    <lineage>
        <taxon>Bacteria</taxon>
        <taxon>Bacillati</taxon>
        <taxon>Actinomycetota</taxon>
        <taxon>Actinomycetes</taxon>
        <taxon>Mycobacteriales</taxon>
        <taxon>Mycobacteriaceae</taxon>
        <taxon>Mycolicibacterium</taxon>
    </lineage>
</organism>
<keyword id="KW-0963">Cytoplasm</keyword>
<keyword id="KW-0413">Isomerase</keyword>
<keyword id="KW-0414">Isoprene biosynthesis</keyword>
<keyword id="KW-0460">Magnesium</keyword>
<keyword id="KW-0464">Manganese</keyword>
<keyword id="KW-0479">Metal-binding</keyword>
<accession>A1T5G2</accession>
<reference key="1">
    <citation type="submission" date="2006-12" db="EMBL/GenBank/DDBJ databases">
        <title>Complete sequence of Mycobacterium vanbaalenii PYR-1.</title>
        <authorList>
            <consortium name="US DOE Joint Genome Institute"/>
            <person name="Copeland A."/>
            <person name="Lucas S."/>
            <person name="Lapidus A."/>
            <person name="Barry K."/>
            <person name="Detter J.C."/>
            <person name="Glavina del Rio T."/>
            <person name="Hammon N."/>
            <person name="Israni S."/>
            <person name="Dalin E."/>
            <person name="Tice H."/>
            <person name="Pitluck S."/>
            <person name="Singan V."/>
            <person name="Schmutz J."/>
            <person name="Larimer F."/>
            <person name="Land M."/>
            <person name="Hauser L."/>
            <person name="Kyrpides N."/>
            <person name="Anderson I.J."/>
            <person name="Miller C."/>
            <person name="Richardson P."/>
        </authorList>
    </citation>
    <scope>NUCLEOTIDE SEQUENCE [LARGE SCALE GENOMIC DNA]</scope>
    <source>
        <strain>DSM 7251 / JCM 13017 / BCRC 16820 / KCTC 9966 / NRRL B-24157 / PYR-1</strain>
    </source>
</reference>
<name>IDI_MYCVP</name>